<gene>
    <name type="primary">hoxF</name>
</gene>
<protein>
    <recommendedName>
        <fullName>NAD-reducing hydrogenase HoxS subunit alpha</fullName>
        <ecNumber>1.12.1.2</ecNumber>
    </recommendedName>
</protein>
<proteinExistence type="evidence at protein level"/>
<geneLocation type="plasmid"/>
<name>HOXF_RHOOP</name>
<keyword id="KW-0004">4Fe-4S</keyword>
<keyword id="KW-0963">Cytoplasm</keyword>
<keyword id="KW-0903">Direct protein sequencing</keyword>
<keyword id="KW-0285">Flavoprotein</keyword>
<keyword id="KW-0288">FMN</keyword>
<keyword id="KW-0408">Iron</keyword>
<keyword id="KW-0411">Iron-sulfur</keyword>
<keyword id="KW-0479">Metal-binding</keyword>
<keyword id="KW-0520">NAD</keyword>
<keyword id="KW-0560">Oxidoreductase</keyword>
<keyword id="KW-0614">Plasmid</keyword>
<organism>
    <name type="scientific">Rhodococcus opacus</name>
    <name type="common">Nocardia opaca</name>
    <dbReference type="NCBI Taxonomy" id="37919"/>
    <lineage>
        <taxon>Bacteria</taxon>
        <taxon>Bacillati</taxon>
        <taxon>Actinomycetota</taxon>
        <taxon>Actinomycetes</taxon>
        <taxon>Mycobacteriales</taxon>
        <taxon>Nocardiaceae</taxon>
        <taxon>Rhodococcus</taxon>
    </lineage>
</organism>
<reference key="1">
    <citation type="journal article" date="1989" name="Eur. J. Biochem.">
        <title>Comparison of the NH2-terminal amino acid sequences of the four non-identical subunits of the NAD-linked hydrogenases from Nocardia opaca 1b and Alcaligenes eutrophus H16.</title>
        <authorList>
            <person name="Zaborosch C."/>
            <person name="Schneider K."/>
            <person name="Schlegel H.G."/>
            <person name="Kratzin H."/>
        </authorList>
    </citation>
    <scope>PROTEIN SEQUENCE</scope>
    <source>
        <strain>1B</strain>
    </source>
</reference>
<evidence type="ECO:0000305" key="1"/>
<accession>P22658</accession>
<sequence>SGDIKAILERNGSERTRLIDILWDVQHLYGHIPDEVL</sequence>
<dbReference type="EC" id="1.12.1.2"/>
<dbReference type="SMR" id="P22658"/>
<dbReference type="GO" id="GO:0005737">
    <property type="term" value="C:cytoplasm"/>
    <property type="evidence" value="ECO:0007669"/>
    <property type="project" value="UniProtKB-SubCell"/>
</dbReference>
<dbReference type="GO" id="GO:0051539">
    <property type="term" value="F:4 iron, 4 sulfur cluster binding"/>
    <property type="evidence" value="ECO:0007669"/>
    <property type="project" value="UniProtKB-KW"/>
</dbReference>
<dbReference type="GO" id="GO:0047985">
    <property type="term" value="F:hydrogen dehydrogenase activity"/>
    <property type="evidence" value="ECO:0007669"/>
    <property type="project" value="UniProtKB-EC"/>
</dbReference>
<dbReference type="GO" id="GO:0046872">
    <property type="term" value="F:metal ion binding"/>
    <property type="evidence" value="ECO:0007669"/>
    <property type="project" value="UniProtKB-KW"/>
</dbReference>
<dbReference type="Gene3D" id="1.10.10.1590">
    <property type="entry name" value="NADH-quinone oxidoreductase subunit E"/>
    <property type="match status" value="1"/>
</dbReference>
<dbReference type="InterPro" id="IPR041921">
    <property type="entry name" value="NuoE_N"/>
</dbReference>
<feature type="chain" id="PRO_0000118565" description="NAD-reducing hydrogenase HoxS subunit alpha">
    <location>
        <begin position="1"/>
        <end position="37" status="greater than"/>
    </location>
</feature>
<feature type="non-terminal residue">
    <location>
        <position position="37"/>
    </location>
</feature>
<comment type="function">
    <text>Subunits alpha and gamma of HoxS constitute an NADH--oxidoreductase.</text>
</comment>
<comment type="catalytic activity">
    <reaction>
        <text>H2 + NAD(+) = NADH + H(+)</text>
        <dbReference type="Rhea" id="RHEA:24636"/>
        <dbReference type="ChEBI" id="CHEBI:15378"/>
        <dbReference type="ChEBI" id="CHEBI:18276"/>
        <dbReference type="ChEBI" id="CHEBI:57540"/>
        <dbReference type="ChEBI" id="CHEBI:57945"/>
        <dbReference type="EC" id="1.12.1.2"/>
    </reaction>
</comment>
<comment type="cofactor">
    <cofactor evidence="1">
        <name>FMN</name>
        <dbReference type="ChEBI" id="CHEBI:58210"/>
    </cofactor>
    <text evidence="1">Binds 1 FMN.</text>
</comment>
<comment type="cofactor">
    <cofactor evidence="1">
        <name>[4Fe-4S] cluster</name>
        <dbReference type="ChEBI" id="CHEBI:49883"/>
    </cofactor>
    <text evidence="1">Binds 1 [4Fe-4S] cluster.</text>
</comment>
<comment type="subunit">
    <text>Tetramer of an alpha and a gamma subunits (flavin-containing dimer), and a delta and a nickel-containing beta subunits (hydrogenase dimer).</text>
</comment>
<comment type="subcellular location">
    <subcellularLocation>
        <location>Cytoplasm</location>
    </subcellularLocation>
</comment>
<comment type="similarity">
    <text evidence="1">Belongs to the complex I 51 kDa subunit family.</text>
</comment>